<organism>
    <name type="scientific">Campylobacter jejuni subsp. jejuni serotype O:23/36 (strain 81-176)</name>
    <dbReference type="NCBI Taxonomy" id="354242"/>
    <lineage>
        <taxon>Bacteria</taxon>
        <taxon>Pseudomonadati</taxon>
        <taxon>Campylobacterota</taxon>
        <taxon>Epsilonproteobacteria</taxon>
        <taxon>Campylobacterales</taxon>
        <taxon>Campylobacteraceae</taxon>
        <taxon>Campylobacter</taxon>
    </lineage>
</organism>
<keyword id="KW-0997">Cell inner membrane</keyword>
<keyword id="KW-1003">Cell membrane</keyword>
<keyword id="KW-0472">Membrane</keyword>
<keyword id="KW-0808">Transferase</keyword>
<keyword id="KW-0812">Transmembrane</keyword>
<keyword id="KW-1133">Transmembrane helix</keyword>
<protein>
    <recommendedName>
        <fullName evidence="1">Phosphatidylglycerol--prolipoprotein diacylglyceryl transferase</fullName>
        <ecNumber evidence="1">2.5.1.145</ecNumber>
    </recommendedName>
</protein>
<sequence>MEFWQHIYSNFNVIAFSIFGLKVHWYGIMYVIALLLALLLAKFFVKKFQLDINEKHLDSYFIWVEIGVILGARLGYILIYDANTMYYITHPWQIFNPYINGEFVGIRGMSYHGAIIGFLIATLLFCKKYKTNPWIFLDLVALSVPLAYVFGRIGNFLNQELFGRITNVPWGIYVDGILRHPSQLYEAFLEGIVVFIIVYLARFKQSFQGELILVYAGAYSLARFICEFYREPDFGIGFVLWGMSMGQILSFIMFITALLVYICIKFKKVNI</sequence>
<evidence type="ECO:0000255" key="1">
    <source>
        <dbReference type="HAMAP-Rule" id="MF_01147"/>
    </source>
</evidence>
<name>LGT_CAMJJ</name>
<accession>A1VYC7</accession>
<dbReference type="EC" id="2.5.1.145" evidence="1"/>
<dbReference type="EMBL" id="CP000538">
    <property type="protein sequence ID" value="EAQ73200.1"/>
    <property type="molecule type" value="Genomic_DNA"/>
</dbReference>
<dbReference type="RefSeq" id="WP_009882152.1">
    <property type="nucleotide sequence ID" value="NC_008787.1"/>
</dbReference>
<dbReference type="SMR" id="A1VYC7"/>
<dbReference type="KEGG" id="cjj:CJJ81176_0431"/>
<dbReference type="eggNOG" id="COG0682">
    <property type="taxonomic scope" value="Bacteria"/>
</dbReference>
<dbReference type="HOGENOM" id="CLU_013386_1_2_7"/>
<dbReference type="UniPathway" id="UPA00664"/>
<dbReference type="Proteomes" id="UP000000646">
    <property type="component" value="Chromosome"/>
</dbReference>
<dbReference type="GO" id="GO:0005886">
    <property type="term" value="C:plasma membrane"/>
    <property type="evidence" value="ECO:0007669"/>
    <property type="project" value="UniProtKB-SubCell"/>
</dbReference>
<dbReference type="GO" id="GO:0008961">
    <property type="term" value="F:phosphatidylglycerol-prolipoprotein diacylglyceryl transferase activity"/>
    <property type="evidence" value="ECO:0007669"/>
    <property type="project" value="UniProtKB-UniRule"/>
</dbReference>
<dbReference type="GO" id="GO:0042158">
    <property type="term" value="P:lipoprotein biosynthetic process"/>
    <property type="evidence" value="ECO:0007669"/>
    <property type="project" value="UniProtKB-UniRule"/>
</dbReference>
<dbReference type="HAMAP" id="MF_01147">
    <property type="entry name" value="Lgt"/>
    <property type="match status" value="1"/>
</dbReference>
<dbReference type="InterPro" id="IPR001640">
    <property type="entry name" value="Lgt"/>
</dbReference>
<dbReference type="NCBIfam" id="TIGR00544">
    <property type="entry name" value="lgt"/>
    <property type="match status" value="1"/>
</dbReference>
<dbReference type="PANTHER" id="PTHR30589:SF0">
    <property type="entry name" value="PHOSPHATIDYLGLYCEROL--PROLIPOPROTEIN DIACYLGLYCERYL TRANSFERASE"/>
    <property type="match status" value="1"/>
</dbReference>
<dbReference type="PANTHER" id="PTHR30589">
    <property type="entry name" value="PROLIPOPROTEIN DIACYLGLYCERYL TRANSFERASE"/>
    <property type="match status" value="1"/>
</dbReference>
<dbReference type="Pfam" id="PF01790">
    <property type="entry name" value="LGT"/>
    <property type="match status" value="1"/>
</dbReference>
<dbReference type="PROSITE" id="PS01311">
    <property type="entry name" value="LGT"/>
    <property type="match status" value="1"/>
</dbReference>
<gene>
    <name evidence="1" type="primary">lgt</name>
    <name type="ordered locus">CJJ81176_0431</name>
</gene>
<comment type="function">
    <text evidence="1">Catalyzes the transfer of the diacylglyceryl group from phosphatidylglycerol to the sulfhydryl group of the N-terminal cysteine of a prolipoprotein, the first step in the formation of mature lipoproteins.</text>
</comment>
<comment type="catalytic activity">
    <reaction evidence="1">
        <text>L-cysteinyl-[prolipoprotein] + a 1,2-diacyl-sn-glycero-3-phospho-(1'-sn-glycerol) = an S-1,2-diacyl-sn-glyceryl-L-cysteinyl-[prolipoprotein] + sn-glycerol 1-phosphate + H(+)</text>
        <dbReference type="Rhea" id="RHEA:56712"/>
        <dbReference type="Rhea" id="RHEA-COMP:14679"/>
        <dbReference type="Rhea" id="RHEA-COMP:14680"/>
        <dbReference type="ChEBI" id="CHEBI:15378"/>
        <dbReference type="ChEBI" id="CHEBI:29950"/>
        <dbReference type="ChEBI" id="CHEBI:57685"/>
        <dbReference type="ChEBI" id="CHEBI:64716"/>
        <dbReference type="ChEBI" id="CHEBI:140658"/>
        <dbReference type="EC" id="2.5.1.145"/>
    </reaction>
</comment>
<comment type="pathway">
    <text evidence="1">Protein modification; lipoprotein biosynthesis (diacylglyceryl transfer).</text>
</comment>
<comment type="subcellular location">
    <subcellularLocation>
        <location evidence="1">Cell inner membrane</location>
        <topology evidence="1">Multi-pass membrane protein</topology>
    </subcellularLocation>
</comment>
<comment type="similarity">
    <text evidence="1">Belongs to the Lgt family.</text>
</comment>
<reference key="1">
    <citation type="submission" date="2006-12" db="EMBL/GenBank/DDBJ databases">
        <authorList>
            <person name="Fouts D.E."/>
            <person name="Nelson K.E."/>
            <person name="Sebastian Y."/>
        </authorList>
    </citation>
    <scope>NUCLEOTIDE SEQUENCE [LARGE SCALE GENOMIC DNA]</scope>
    <source>
        <strain>81-176</strain>
    </source>
</reference>
<proteinExistence type="inferred from homology"/>
<feature type="chain" id="PRO_1000053412" description="Phosphatidylglycerol--prolipoprotein diacylglyceryl transferase">
    <location>
        <begin position="1"/>
        <end position="271"/>
    </location>
</feature>
<feature type="transmembrane region" description="Helical" evidence="1">
    <location>
        <begin position="25"/>
        <end position="45"/>
    </location>
</feature>
<feature type="transmembrane region" description="Helical" evidence="1">
    <location>
        <begin position="60"/>
        <end position="80"/>
    </location>
</feature>
<feature type="transmembrane region" description="Helical" evidence="1">
    <location>
        <begin position="103"/>
        <end position="123"/>
    </location>
</feature>
<feature type="transmembrane region" description="Helical" evidence="1">
    <location>
        <begin position="134"/>
        <end position="154"/>
    </location>
</feature>
<feature type="transmembrane region" description="Helical" evidence="1">
    <location>
        <begin position="181"/>
        <end position="201"/>
    </location>
</feature>
<feature type="transmembrane region" description="Helical" evidence="1">
    <location>
        <begin position="209"/>
        <end position="229"/>
    </location>
</feature>
<feature type="transmembrane region" description="Helical" evidence="1">
    <location>
        <begin position="235"/>
        <end position="255"/>
    </location>
</feature>
<feature type="binding site" evidence="1">
    <location>
        <position position="152"/>
    </location>
    <ligand>
        <name>a 1,2-diacyl-sn-glycero-3-phospho-(1'-sn-glycerol)</name>
        <dbReference type="ChEBI" id="CHEBI:64716"/>
    </ligand>
</feature>